<comment type="subcellular location">
    <subcellularLocation>
        <location evidence="1">Cytoplasm</location>
    </subcellularLocation>
</comment>
<comment type="miscellaneous">
    <text evidence="2">Present with 504 molecules/cell in log phase SD medium.</text>
</comment>
<feature type="chain" id="PRO_0000244636" description="Uncharacterized protein YOR385W">
    <location>
        <begin position="1"/>
        <end position="290"/>
    </location>
</feature>
<gene>
    <name type="ordered locus">YOR385W</name>
</gene>
<proteinExistence type="evidence at protein level"/>
<reference key="1">
    <citation type="journal article" date="1997" name="Nature">
        <title>The nucleotide sequence of Saccharomyces cerevisiae chromosome XV.</title>
        <authorList>
            <person name="Dujon B."/>
            <person name="Albermann K."/>
            <person name="Aldea M."/>
            <person name="Alexandraki D."/>
            <person name="Ansorge W."/>
            <person name="Arino J."/>
            <person name="Benes V."/>
            <person name="Bohn C."/>
            <person name="Bolotin-Fukuhara M."/>
            <person name="Bordonne R."/>
            <person name="Boyer J."/>
            <person name="Camasses A."/>
            <person name="Casamayor A."/>
            <person name="Casas C."/>
            <person name="Cheret G."/>
            <person name="Cziepluch C."/>
            <person name="Daignan-Fornier B."/>
            <person name="Dang V.-D."/>
            <person name="de Haan M."/>
            <person name="Delius H."/>
            <person name="Durand P."/>
            <person name="Fairhead C."/>
            <person name="Feldmann H."/>
            <person name="Gaillon L."/>
            <person name="Galisson F."/>
            <person name="Gamo F.-J."/>
            <person name="Gancedo C."/>
            <person name="Goffeau A."/>
            <person name="Goulding S.E."/>
            <person name="Grivell L.A."/>
            <person name="Habbig B."/>
            <person name="Hand N.J."/>
            <person name="Hani J."/>
            <person name="Hattenhorst U."/>
            <person name="Hebling U."/>
            <person name="Hernando Y."/>
            <person name="Herrero E."/>
            <person name="Heumann K."/>
            <person name="Hiesel R."/>
            <person name="Hilger F."/>
            <person name="Hofmann B."/>
            <person name="Hollenberg C.P."/>
            <person name="Hughes B."/>
            <person name="Jauniaux J.-C."/>
            <person name="Kalogeropoulos A."/>
            <person name="Katsoulou C."/>
            <person name="Kordes E."/>
            <person name="Lafuente M.J."/>
            <person name="Landt O."/>
            <person name="Louis E.J."/>
            <person name="Maarse A.C."/>
            <person name="Madania A."/>
            <person name="Mannhaupt G."/>
            <person name="Marck C."/>
            <person name="Martin R.P."/>
            <person name="Mewes H.-W."/>
            <person name="Michaux G."/>
            <person name="Paces V."/>
            <person name="Parle-McDermott A.G."/>
            <person name="Pearson B.M."/>
            <person name="Perrin A."/>
            <person name="Pettersson B."/>
            <person name="Poch O."/>
            <person name="Pohl T.M."/>
            <person name="Poirey R."/>
            <person name="Portetelle D."/>
            <person name="Pujol A."/>
            <person name="Purnelle B."/>
            <person name="Ramezani Rad M."/>
            <person name="Rechmann S."/>
            <person name="Schwager C."/>
            <person name="Schweizer M."/>
            <person name="Sor F."/>
            <person name="Sterky F."/>
            <person name="Tarassov I.A."/>
            <person name="Teodoru C."/>
            <person name="Tettelin H."/>
            <person name="Thierry A."/>
            <person name="Tobiasch E."/>
            <person name="Tzermia M."/>
            <person name="Uhlen M."/>
            <person name="Unseld M."/>
            <person name="Valens M."/>
            <person name="Vandenbol M."/>
            <person name="Vetter I."/>
            <person name="Vlcek C."/>
            <person name="Voet M."/>
            <person name="Volckaert G."/>
            <person name="Voss H."/>
            <person name="Wambutt R."/>
            <person name="Wedler H."/>
            <person name="Wiemann S."/>
            <person name="Winsor B."/>
            <person name="Wolfe K.H."/>
            <person name="Zollner A."/>
            <person name="Zumstein E."/>
            <person name="Kleine K."/>
        </authorList>
    </citation>
    <scope>NUCLEOTIDE SEQUENCE [LARGE SCALE GENOMIC DNA]</scope>
    <source>
        <strain>ATCC 204508 / S288c</strain>
    </source>
</reference>
<reference key="2">
    <citation type="journal article" date="2014" name="G3 (Bethesda)">
        <title>The reference genome sequence of Saccharomyces cerevisiae: Then and now.</title>
        <authorList>
            <person name="Engel S.R."/>
            <person name="Dietrich F.S."/>
            <person name="Fisk D.G."/>
            <person name="Binkley G."/>
            <person name="Balakrishnan R."/>
            <person name="Costanzo M.C."/>
            <person name="Dwight S.S."/>
            <person name="Hitz B.C."/>
            <person name="Karra K."/>
            <person name="Nash R.S."/>
            <person name="Weng S."/>
            <person name="Wong E.D."/>
            <person name="Lloyd P."/>
            <person name="Skrzypek M.S."/>
            <person name="Miyasato S.R."/>
            <person name="Simison M."/>
            <person name="Cherry J.M."/>
        </authorList>
    </citation>
    <scope>GENOME REANNOTATION</scope>
    <source>
        <strain>ATCC 204508 / S288c</strain>
    </source>
</reference>
<reference key="3">
    <citation type="journal article" date="2003" name="Nature">
        <title>Global analysis of protein localization in budding yeast.</title>
        <authorList>
            <person name="Huh W.-K."/>
            <person name="Falvo J.V."/>
            <person name="Gerke L.C."/>
            <person name="Carroll A.S."/>
            <person name="Howson R.W."/>
            <person name="Weissman J.S."/>
            <person name="O'Shea E.K."/>
        </authorList>
    </citation>
    <scope>SUBCELLULAR LOCATION [LARGE SCALE ANALYSIS]</scope>
</reference>
<reference key="4">
    <citation type="journal article" date="2003" name="Nature">
        <title>Global analysis of protein expression in yeast.</title>
        <authorList>
            <person name="Ghaemmaghami S."/>
            <person name="Huh W.-K."/>
            <person name="Bower K."/>
            <person name="Howson R.W."/>
            <person name="Belle A."/>
            <person name="Dephoure N."/>
            <person name="O'Shea E.K."/>
            <person name="Weissman J.S."/>
        </authorList>
    </citation>
    <scope>LEVEL OF PROTEIN EXPRESSION [LARGE SCALE ANALYSIS]</scope>
</reference>
<name>YO385_YEAST</name>
<organism>
    <name type="scientific">Saccharomyces cerevisiae (strain ATCC 204508 / S288c)</name>
    <name type="common">Baker's yeast</name>
    <dbReference type="NCBI Taxonomy" id="559292"/>
    <lineage>
        <taxon>Eukaryota</taxon>
        <taxon>Fungi</taxon>
        <taxon>Dikarya</taxon>
        <taxon>Ascomycota</taxon>
        <taxon>Saccharomycotina</taxon>
        <taxon>Saccharomycetes</taxon>
        <taxon>Saccharomycetales</taxon>
        <taxon>Saccharomycetaceae</taxon>
        <taxon>Saccharomyces</taxon>
    </lineage>
</organism>
<evidence type="ECO:0000269" key="1">
    <source>
    </source>
</evidence>
<evidence type="ECO:0000269" key="2">
    <source>
    </source>
</evidence>
<accession>Q08909</accession>
<accession>D6W378</accession>
<protein>
    <recommendedName>
        <fullName>Uncharacterized protein YOR385W</fullName>
    </recommendedName>
</protein>
<keyword id="KW-0963">Cytoplasm</keyword>
<keyword id="KW-1185">Reference proteome</keyword>
<sequence length="290" mass="34064">MRGFSGQPLSDDDNYRIEKTQRNTIPERLHFSRERNMPIASIFGTRGYFVFSSEQSYDKFKQTNFNISTLDADGVGVPLFHIVQSYNVIGKITRSSPDFYIYKYVLQGVQDPPLYSDCKVICQDKVFRLCKILYCEIYAHQGFFETKYDFFYPSKTQPVKKYQIIKQSNMRDLYSTLDGMRFRWHVKFYSDHFRLMFLDEDRLNYSNSNQKERQKPDQGKSKAPDFVIGHYTRTFSDILPRSTSKCSNLIIGEHSKPDSLGITTVPDLTQEFACQGALIHYLLHIERERK</sequence>
<dbReference type="EMBL" id="Z75293">
    <property type="protein sequence ID" value="CAA99717.1"/>
    <property type="molecule type" value="Genomic_DNA"/>
</dbReference>
<dbReference type="EMBL" id="BK006948">
    <property type="protein sequence ID" value="DAA11144.1"/>
    <property type="molecule type" value="Genomic_DNA"/>
</dbReference>
<dbReference type="PIR" id="S67297">
    <property type="entry name" value="S67297"/>
</dbReference>
<dbReference type="RefSeq" id="NP_015030.3">
    <property type="nucleotide sequence ID" value="NM_001183805.3"/>
</dbReference>
<dbReference type="BioGRID" id="34766">
    <property type="interactions" value="46"/>
</dbReference>
<dbReference type="DIP" id="DIP-4047N"/>
<dbReference type="FunCoup" id="Q08909">
    <property type="interactions" value="52"/>
</dbReference>
<dbReference type="IntAct" id="Q08909">
    <property type="interactions" value="3"/>
</dbReference>
<dbReference type="STRING" id="4932.YOR385W"/>
<dbReference type="iPTMnet" id="Q08909"/>
<dbReference type="PaxDb" id="4932-YOR385W"/>
<dbReference type="PeptideAtlas" id="Q08909"/>
<dbReference type="EnsemblFungi" id="YOR385W_mRNA">
    <property type="protein sequence ID" value="YOR385W"/>
    <property type="gene ID" value="YOR385W"/>
</dbReference>
<dbReference type="GeneID" id="854567"/>
<dbReference type="KEGG" id="sce:YOR385W"/>
<dbReference type="AGR" id="SGD:S000005912"/>
<dbReference type="SGD" id="S000005912">
    <property type="gene designation" value="YOR385W"/>
</dbReference>
<dbReference type="VEuPathDB" id="FungiDB:YOR385W"/>
<dbReference type="eggNOG" id="ENOG502S58H">
    <property type="taxonomic scope" value="Eukaryota"/>
</dbReference>
<dbReference type="GeneTree" id="ENSGT00940000176746"/>
<dbReference type="HOGENOM" id="CLU_065220_0_0_1"/>
<dbReference type="InParanoid" id="Q08909"/>
<dbReference type="OMA" id="CTERTMP"/>
<dbReference type="OrthoDB" id="4031722at2759"/>
<dbReference type="BioCyc" id="YEAST:G3O-33847-MONOMER"/>
<dbReference type="BioGRID-ORCS" id="854567">
    <property type="hits" value="0 hits in 10 CRISPR screens"/>
</dbReference>
<dbReference type="PRO" id="PR:Q08909"/>
<dbReference type="Proteomes" id="UP000002311">
    <property type="component" value="Chromosome XV"/>
</dbReference>
<dbReference type="RNAct" id="Q08909">
    <property type="molecule type" value="protein"/>
</dbReference>
<dbReference type="GO" id="GO:0005737">
    <property type="term" value="C:cytoplasm"/>
    <property type="evidence" value="ECO:0007005"/>
    <property type="project" value="SGD"/>
</dbReference>